<name>Y1782_XANOM</name>
<organism>
    <name type="scientific">Xanthomonas oryzae pv. oryzae (strain MAFF 311018)</name>
    <dbReference type="NCBI Taxonomy" id="342109"/>
    <lineage>
        <taxon>Bacteria</taxon>
        <taxon>Pseudomonadati</taxon>
        <taxon>Pseudomonadota</taxon>
        <taxon>Gammaproteobacteria</taxon>
        <taxon>Lysobacterales</taxon>
        <taxon>Lysobacteraceae</taxon>
        <taxon>Xanthomonas</taxon>
    </lineage>
</organism>
<protein>
    <recommendedName>
        <fullName evidence="1">UPF0391 membrane protein XOO1782</fullName>
    </recommendedName>
</protein>
<sequence>MIKWAIIFAIIGLIAGALGFGGMAGAAMGIAKFLFWAGIIIAIVLFVLGMTIAKKVI</sequence>
<comment type="subcellular location">
    <subcellularLocation>
        <location evidence="1">Cell membrane</location>
        <topology evidence="1">Multi-pass membrane protein</topology>
    </subcellularLocation>
</comment>
<comment type="similarity">
    <text evidence="1">Belongs to the UPF0391 family.</text>
</comment>
<gene>
    <name type="ordered locus">XOO1782</name>
</gene>
<reference key="1">
    <citation type="journal article" date="2005" name="Jpn. Agric. Res. Q.">
        <title>Genome sequence of Xanthomonas oryzae pv. oryzae suggests contribution of large numbers of effector genes and insertion sequences to its race diversity.</title>
        <authorList>
            <person name="Ochiai H."/>
            <person name="Inoue Y."/>
            <person name="Takeya M."/>
            <person name="Sasaki A."/>
            <person name="Kaku H."/>
        </authorList>
    </citation>
    <scope>NUCLEOTIDE SEQUENCE [LARGE SCALE GENOMIC DNA]</scope>
    <source>
        <strain>MAFF 311018</strain>
    </source>
</reference>
<feature type="chain" id="PRO_0000256806" description="UPF0391 membrane protein XOO1782">
    <location>
        <begin position="1"/>
        <end position="57"/>
    </location>
</feature>
<feature type="transmembrane region" description="Helical" evidence="1">
    <location>
        <begin position="4"/>
        <end position="24"/>
    </location>
</feature>
<feature type="transmembrane region" description="Helical" evidence="1">
    <location>
        <begin position="33"/>
        <end position="53"/>
    </location>
</feature>
<dbReference type="EMBL" id="AP008229">
    <property type="protein sequence ID" value="BAE68537.1"/>
    <property type="molecule type" value="Genomic_DNA"/>
</dbReference>
<dbReference type="RefSeq" id="WP_011258629.1">
    <property type="nucleotide sequence ID" value="NC_007705.1"/>
</dbReference>
<dbReference type="KEGG" id="xom:XOO1782"/>
<dbReference type="HOGENOM" id="CLU_187346_1_1_6"/>
<dbReference type="GO" id="GO:0005886">
    <property type="term" value="C:plasma membrane"/>
    <property type="evidence" value="ECO:0007669"/>
    <property type="project" value="UniProtKB-SubCell"/>
</dbReference>
<dbReference type="HAMAP" id="MF_01361">
    <property type="entry name" value="UPF0391"/>
    <property type="match status" value="1"/>
</dbReference>
<dbReference type="InterPro" id="IPR009760">
    <property type="entry name" value="DUF1328"/>
</dbReference>
<dbReference type="NCBIfam" id="NF010231">
    <property type="entry name" value="PRK13682.2-1"/>
    <property type="match status" value="1"/>
</dbReference>
<dbReference type="Pfam" id="PF07043">
    <property type="entry name" value="DUF1328"/>
    <property type="match status" value="1"/>
</dbReference>
<dbReference type="PIRSF" id="PIRSF036466">
    <property type="entry name" value="UCP036466"/>
    <property type="match status" value="1"/>
</dbReference>
<accession>Q2P4J0</accession>
<evidence type="ECO:0000255" key="1">
    <source>
        <dbReference type="HAMAP-Rule" id="MF_01361"/>
    </source>
</evidence>
<proteinExistence type="inferred from homology"/>
<keyword id="KW-1003">Cell membrane</keyword>
<keyword id="KW-0472">Membrane</keyword>
<keyword id="KW-0812">Transmembrane</keyword>
<keyword id="KW-1133">Transmembrane helix</keyword>